<sequence length="513" mass="56496">MKNSMNVSEIASIIREKVETFDNPIKRENIGEVISVTDGIALVYGLEKAKFGEKVFFASGVEGIVLDLDHNTAGIVVLGNDRDVKEGDVVKCSGDVVQVPVGHELLGRVVNALGHPMDDGGEIRAKNRMDIESKAPGIIDRKSVHEPLQTGIKIIDLLIPIGRGQRELIIGDRQIGKTTIALDTIINQKKVNDEVNENQKVYCVYVAIGQKISTVAKVVNKLKESGALEYTTVVVASASDCAPMQFLAPYAGCTIGEFFRDNGMHCLIIYDDLSKHAVAYRQMSLLLRRPPGREAYPGDIFYVHSRLLERAAKMSDKKGQGSLTALPIVETQAGDVSAYVPTNVISITDGQIFLESELFYKGFRPAVNIGLSVSRVGSAAQLKSVKKVAGSIKLSLAQYRELEDFAKFGSDLDASVQLSLNKGKYLVELLKQKQHLPMSIEEQVVLMYIFSNLYNQLSKIQISNVNKFEHDLVNYFRTVHPGVLKKLSNDMNGDIKGDIFNIVSNFVTQFNCV</sequence>
<proteinExistence type="inferred from homology"/>
<keyword id="KW-0066">ATP synthesis</keyword>
<keyword id="KW-0067">ATP-binding</keyword>
<keyword id="KW-1003">Cell membrane</keyword>
<keyword id="KW-0139">CF(1)</keyword>
<keyword id="KW-0375">Hydrogen ion transport</keyword>
<keyword id="KW-0406">Ion transport</keyword>
<keyword id="KW-0472">Membrane</keyword>
<keyword id="KW-0547">Nucleotide-binding</keyword>
<keyword id="KW-1278">Translocase</keyword>
<keyword id="KW-0813">Transport</keyword>
<accession>Q73HB2</accession>
<name>ATPA_WOLPM</name>
<reference key="1">
    <citation type="journal article" date="2004" name="PLoS Biol.">
        <title>Phylogenomics of the reproductive parasite Wolbachia pipientis wMel: a streamlined genome overrun by mobile genetic elements.</title>
        <authorList>
            <person name="Wu M."/>
            <person name="Sun L.V."/>
            <person name="Vamathevan J.J."/>
            <person name="Riegler M."/>
            <person name="DeBoy R.T."/>
            <person name="Brownlie J.C."/>
            <person name="McGraw E.A."/>
            <person name="Martin W."/>
            <person name="Esser C."/>
            <person name="Ahmadinejad N."/>
            <person name="Wiegand C."/>
            <person name="Madupu R."/>
            <person name="Beanan M.J."/>
            <person name="Brinkac L.M."/>
            <person name="Daugherty S.C."/>
            <person name="Durkin A.S."/>
            <person name="Kolonay J.F."/>
            <person name="Nelson W.C."/>
            <person name="Mohamoud Y."/>
            <person name="Lee P."/>
            <person name="Berry K.J."/>
            <person name="Young M.B."/>
            <person name="Utterback T.R."/>
            <person name="Weidman J.F."/>
            <person name="Nierman W.C."/>
            <person name="Paulsen I.T."/>
            <person name="Nelson K.E."/>
            <person name="Tettelin H."/>
            <person name="O'Neill S.L."/>
            <person name="Eisen J.A."/>
        </authorList>
    </citation>
    <scope>NUCLEOTIDE SEQUENCE [LARGE SCALE GENOMIC DNA]</scope>
</reference>
<gene>
    <name evidence="1" type="primary">atpA</name>
    <name type="ordered locus">WD_0655</name>
</gene>
<protein>
    <recommendedName>
        <fullName evidence="1">ATP synthase subunit alpha</fullName>
        <ecNumber evidence="1">7.1.2.2</ecNumber>
    </recommendedName>
    <alternativeName>
        <fullName evidence="1">ATP synthase F1 sector subunit alpha</fullName>
    </alternativeName>
    <alternativeName>
        <fullName evidence="1">F-ATPase subunit alpha</fullName>
    </alternativeName>
</protein>
<dbReference type="EC" id="7.1.2.2" evidence="1"/>
<dbReference type="EMBL" id="AE017196">
    <property type="protein sequence ID" value="AAS14353.1"/>
    <property type="molecule type" value="Genomic_DNA"/>
</dbReference>
<dbReference type="RefSeq" id="WP_010962741.1">
    <property type="nucleotide sequence ID" value="NZ_OX384529.1"/>
</dbReference>
<dbReference type="SMR" id="Q73HB2"/>
<dbReference type="EnsemblBacteria" id="AAS14353">
    <property type="protein sequence ID" value="AAS14353"/>
    <property type="gene ID" value="WD_0655"/>
</dbReference>
<dbReference type="GeneID" id="70036137"/>
<dbReference type="KEGG" id="wol:WD_0655"/>
<dbReference type="eggNOG" id="COG0056">
    <property type="taxonomic scope" value="Bacteria"/>
</dbReference>
<dbReference type="Proteomes" id="UP000008215">
    <property type="component" value="Chromosome"/>
</dbReference>
<dbReference type="GO" id="GO:0005886">
    <property type="term" value="C:plasma membrane"/>
    <property type="evidence" value="ECO:0007669"/>
    <property type="project" value="UniProtKB-SubCell"/>
</dbReference>
<dbReference type="GO" id="GO:0045259">
    <property type="term" value="C:proton-transporting ATP synthase complex"/>
    <property type="evidence" value="ECO:0007669"/>
    <property type="project" value="UniProtKB-KW"/>
</dbReference>
<dbReference type="GO" id="GO:0043531">
    <property type="term" value="F:ADP binding"/>
    <property type="evidence" value="ECO:0007669"/>
    <property type="project" value="TreeGrafter"/>
</dbReference>
<dbReference type="GO" id="GO:0005524">
    <property type="term" value="F:ATP binding"/>
    <property type="evidence" value="ECO:0007669"/>
    <property type="project" value="UniProtKB-UniRule"/>
</dbReference>
<dbReference type="GO" id="GO:0046933">
    <property type="term" value="F:proton-transporting ATP synthase activity, rotational mechanism"/>
    <property type="evidence" value="ECO:0007669"/>
    <property type="project" value="UniProtKB-UniRule"/>
</dbReference>
<dbReference type="CDD" id="cd18113">
    <property type="entry name" value="ATP-synt_F1_alpha_C"/>
    <property type="match status" value="1"/>
</dbReference>
<dbReference type="CDD" id="cd18116">
    <property type="entry name" value="ATP-synt_F1_alpha_N"/>
    <property type="match status" value="1"/>
</dbReference>
<dbReference type="CDD" id="cd01132">
    <property type="entry name" value="F1-ATPase_alpha_CD"/>
    <property type="match status" value="1"/>
</dbReference>
<dbReference type="FunFam" id="1.20.150.20:FF:000001">
    <property type="entry name" value="ATP synthase subunit alpha"/>
    <property type="match status" value="1"/>
</dbReference>
<dbReference type="FunFam" id="3.40.50.300:FF:002432">
    <property type="entry name" value="ATP synthase subunit alpha, mitochondrial"/>
    <property type="match status" value="1"/>
</dbReference>
<dbReference type="Gene3D" id="2.40.30.20">
    <property type="match status" value="1"/>
</dbReference>
<dbReference type="Gene3D" id="1.20.150.20">
    <property type="entry name" value="ATP synthase alpha/beta chain, C-terminal domain"/>
    <property type="match status" value="1"/>
</dbReference>
<dbReference type="Gene3D" id="3.40.50.300">
    <property type="entry name" value="P-loop containing nucleotide triphosphate hydrolases"/>
    <property type="match status" value="1"/>
</dbReference>
<dbReference type="HAMAP" id="MF_01346">
    <property type="entry name" value="ATP_synth_alpha_bact"/>
    <property type="match status" value="1"/>
</dbReference>
<dbReference type="InterPro" id="IPR023366">
    <property type="entry name" value="ATP_synth_asu-like_sf"/>
</dbReference>
<dbReference type="InterPro" id="IPR000793">
    <property type="entry name" value="ATP_synth_asu_C"/>
</dbReference>
<dbReference type="InterPro" id="IPR038376">
    <property type="entry name" value="ATP_synth_asu_C_sf"/>
</dbReference>
<dbReference type="InterPro" id="IPR033732">
    <property type="entry name" value="ATP_synth_F1_a_nt-bd_dom"/>
</dbReference>
<dbReference type="InterPro" id="IPR005294">
    <property type="entry name" value="ATP_synth_F1_asu"/>
</dbReference>
<dbReference type="InterPro" id="IPR020003">
    <property type="entry name" value="ATPase_a/bsu_AS"/>
</dbReference>
<dbReference type="InterPro" id="IPR004100">
    <property type="entry name" value="ATPase_F1/V1/A1_a/bsu_N"/>
</dbReference>
<dbReference type="InterPro" id="IPR036121">
    <property type="entry name" value="ATPase_F1/V1/A1_a/bsu_N_sf"/>
</dbReference>
<dbReference type="InterPro" id="IPR000194">
    <property type="entry name" value="ATPase_F1/V1/A1_a/bsu_nucl-bd"/>
</dbReference>
<dbReference type="InterPro" id="IPR027417">
    <property type="entry name" value="P-loop_NTPase"/>
</dbReference>
<dbReference type="NCBIfam" id="TIGR00962">
    <property type="entry name" value="atpA"/>
    <property type="match status" value="1"/>
</dbReference>
<dbReference type="NCBIfam" id="NF009884">
    <property type="entry name" value="PRK13343.1"/>
    <property type="match status" value="1"/>
</dbReference>
<dbReference type="PANTHER" id="PTHR48082">
    <property type="entry name" value="ATP SYNTHASE SUBUNIT ALPHA, MITOCHONDRIAL"/>
    <property type="match status" value="1"/>
</dbReference>
<dbReference type="PANTHER" id="PTHR48082:SF2">
    <property type="entry name" value="ATP SYNTHASE SUBUNIT ALPHA, MITOCHONDRIAL"/>
    <property type="match status" value="1"/>
</dbReference>
<dbReference type="Pfam" id="PF00006">
    <property type="entry name" value="ATP-synt_ab"/>
    <property type="match status" value="1"/>
</dbReference>
<dbReference type="Pfam" id="PF00306">
    <property type="entry name" value="ATP-synt_ab_C"/>
    <property type="match status" value="1"/>
</dbReference>
<dbReference type="Pfam" id="PF02874">
    <property type="entry name" value="ATP-synt_ab_N"/>
    <property type="match status" value="1"/>
</dbReference>
<dbReference type="PIRSF" id="PIRSF039088">
    <property type="entry name" value="F_ATPase_subunit_alpha"/>
    <property type="match status" value="1"/>
</dbReference>
<dbReference type="SUPFAM" id="SSF47917">
    <property type="entry name" value="C-terminal domain of alpha and beta subunits of F1 ATP synthase"/>
    <property type="match status" value="1"/>
</dbReference>
<dbReference type="SUPFAM" id="SSF50615">
    <property type="entry name" value="N-terminal domain of alpha and beta subunits of F1 ATP synthase"/>
    <property type="match status" value="1"/>
</dbReference>
<dbReference type="SUPFAM" id="SSF52540">
    <property type="entry name" value="P-loop containing nucleoside triphosphate hydrolases"/>
    <property type="match status" value="1"/>
</dbReference>
<dbReference type="PROSITE" id="PS00152">
    <property type="entry name" value="ATPASE_ALPHA_BETA"/>
    <property type="match status" value="1"/>
</dbReference>
<organism>
    <name type="scientific">Wolbachia pipientis wMel</name>
    <dbReference type="NCBI Taxonomy" id="163164"/>
    <lineage>
        <taxon>Bacteria</taxon>
        <taxon>Pseudomonadati</taxon>
        <taxon>Pseudomonadota</taxon>
        <taxon>Alphaproteobacteria</taxon>
        <taxon>Rickettsiales</taxon>
        <taxon>Anaplasmataceae</taxon>
        <taxon>Wolbachieae</taxon>
        <taxon>Wolbachia</taxon>
    </lineage>
</organism>
<comment type="function">
    <text evidence="1">Produces ATP from ADP in the presence of a proton gradient across the membrane. The alpha chain is a regulatory subunit.</text>
</comment>
<comment type="catalytic activity">
    <reaction evidence="1">
        <text>ATP + H2O + 4 H(+)(in) = ADP + phosphate + 5 H(+)(out)</text>
        <dbReference type="Rhea" id="RHEA:57720"/>
        <dbReference type="ChEBI" id="CHEBI:15377"/>
        <dbReference type="ChEBI" id="CHEBI:15378"/>
        <dbReference type="ChEBI" id="CHEBI:30616"/>
        <dbReference type="ChEBI" id="CHEBI:43474"/>
        <dbReference type="ChEBI" id="CHEBI:456216"/>
        <dbReference type="EC" id="7.1.2.2"/>
    </reaction>
</comment>
<comment type="subunit">
    <text evidence="1">F-type ATPases have 2 components, CF(1) - the catalytic core - and CF(0) - the membrane proton channel. CF(1) has five subunits: alpha(3), beta(3), gamma(1), delta(1), epsilon(1). CF(0) has three main subunits: a(1), b(2) and c(9-12). The alpha and beta chains form an alternating ring which encloses part of the gamma chain. CF(1) is attached to CF(0) by a central stalk formed by the gamma and epsilon chains, while a peripheral stalk is formed by the delta and b chains.</text>
</comment>
<comment type="subcellular location">
    <subcellularLocation>
        <location evidence="1">Cell membrane</location>
        <topology evidence="1">Peripheral membrane protein</topology>
    </subcellularLocation>
</comment>
<comment type="similarity">
    <text evidence="1">Belongs to the ATPase alpha/beta chains family.</text>
</comment>
<evidence type="ECO:0000255" key="1">
    <source>
        <dbReference type="HAMAP-Rule" id="MF_01346"/>
    </source>
</evidence>
<feature type="chain" id="PRO_0000238399" description="ATP synthase subunit alpha">
    <location>
        <begin position="1"/>
        <end position="513"/>
    </location>
</feature>
<feature type="binding site" evidence="1">
    <location>
        <begin position="171"/>
        <end position="178"/>
    </location>
    <ligand>
        <name>ATP</name>
        <dbReference type="ChEBI" id="CHEBI:30616"/>
    </ligand>
</feature>
<feature type="site" description="Required for activity" evidence="1">
    <location>
        <position position="372"/>
    </location>
</feature>